<protein>
    <recommendedName>
        <fullName evidence="1">HTH-type transcriptional activator RhaS</fullName>
    </recommendedName>
    <alternativeName>
        <fullName evidence="1">L-rhamnose operon regulatory protein RhaS</fullName>
    </alternativeName>
</protein>
<name>RHAS_SALHS</name>
<feature type="chain" id="PRO_1000200962" description="HTH-type transcriptional activator RhaS">
    <location>
        <begin position="1"/>
        <end position="278"/>
    </location>
</feature>
<feature type="domain" description="HTH araC/xylS-type" evidence="1">
    <location>
        <begin position="174"/>
        <end position="272"/>
    </location>
</feature>
<feature type="DNA-binding region" description="H-T-H motif" evidence="1">
    <location>
        <begin position="191"/>
        <end position="212"/>
    </location>
</feature>
<feature type="DNA-binding region" description="H-T-H motif" evidence="1">
    <location>
        <begin position="239"/>
        <end position="262"/>
    </location>
</feature>
<feature type="site" description="Interaction with sigma-70" evidence="1">
    <location>
        <position position="241"/>
    </location>
</feature>
<feature type="site" description="Interaction with sigma-70" evidence="1">
    <location>
        <position position="250"/>
    </location>
</feature>
<evidence type="ECO:0000255" key="1">
    <source>
        <dbReference type="HAMAP-Rule" id="MF_01534"/>
    </source>
</evidence>
<organism>
    <name type="scientific">Salmonella heidelberg (strain SL476)</name>
    <dbReference type="NCBI Taxonomy" id="454169"/>
    <lineage>
        <taxon>Bacteria</taxon>
        <taxon>Pseudomonadati</taxon>
        <taxon>Pseudomonadota</taxon>
        <taxon>Gammaproteobacteria</taxon>
        <taxon>Enterobacterales</taxon>
        <taxon>Enterobacteriaceae</taxon>
        <taxon>Salmonella</taxon>
    </lineage>
</organism>
<keyword id="KW-0010">Activator</keyword>
<keyword id="KW-0963">Cytoplasm</keyword>
<keyword id="KW-0238">DNA-binding</keyword>
<keyword id="KW-0677">Repeat</keyword>
<keyword id="KW-0684">Rhamnose metabolism</keyword>
<keyword id="KW-0804">Transcription</keyword>
<keyword id="KW-0805">Transcription regulation</keyword>
<dbReference type="EMBL" id="CP001120">
    <property type="protein sequence ID" value="ACF67108.1"/>
    <property type="molecule type" value="Genomic_DNA"/>
</dbReference>
<dbReference type="RefSeq" id="WP_000217117.1">
    <property type="nucleotide sequence ID" value="NC_011083.1"/>
</dbReference>
<dbReference type="SMR" id="B4TBY3"/>
<dbReference type="KEGG" id="seh:SeHA_C4377"/>
<dbReference type="HOGENOM" id="CLU_000445_88_5_6"/>
<dbReference type="Proteomes" id="UP000001866">
    <property type="component" value="Chromosome"/>
</dbReference>
<dbReference type="GO" id="GO:0005737">
    <property type="term" value="C:cytoplasm"/>
    <property type="evidence" value="ECO:0007669"/>
    <property type="project" value="UniProtKB-SubCell"/>
</dbReference>
<dbReference type="GO" id="GO:0003700">
    <property type="term" value="F:DNA-binding transcription factor activity"/>
    <property type="evidence" value="ECO:0007669"/>
    <property type="project" value="UniProtKB-UniRule"/>
</dbReference>
<dbReference type="GO" id="GO:0043565">
    <property type="term" value="F:sequence-specific DNA binding"/>
    <property type="evidence" value="ECO:0007669"/>
    <property type="project" value="InterPro"/>
</dbReference>
<dbReference type="GO" id="GO:0045893">
    <property type="term" value="P:positive regulation of DNA-templated transcription"/>
    <property type="evidence" value="ECO:0007669"/>
    <property type="project" value="UniProtKB-UniRule"/>
</dbReference>
<dbReference type="GO" id="GO:0019299">
    <property type="term" value="P:rhamnose metabolic process"/>
    <property type="evidence" value="ECO:0007669"/>
    <property type="project" value="UniProtKB-UniRule"/>
</dbReference>
<dbReference type="CDD" id="cd06977">
    <property type="entry name" value="cupin_RhaR_RhaS-like_N"/>
    <property type="match status" value="1"/>
</dbReference>
<dbReference type="Gene3D" id="1.10.10.60">
    <property type="entry name" value="Homeodomain-like"/>
    <property type="match status" value="1"/>
</dbReference>
<dbReference type="Gene3D" id="2.60.120.10">
    <property type="entry name" value="Jelly Rolls"/>
    <property type="match status" value="1"/>
</dbReference>
<dbReference type="HAMAP" id="MF_01534">
    <property type="entry name" value="HTH_type_RhaS"/>
    <property type="match status" value="1"/>
</dbReference>
<dbReference type="InterPro" id="IPR003313">
    <property type="entry name" value="AraC-bd"/>
</dbReference>
<dbReference type="InterPro" id="IPR050204">
    <property type="entry name" value="AraC_XylS_family_regulators"/>
</dbReference>
<dbReference type="InterPro" id="IPR009057">
    <property type="entry name" value="Homeodomain-like_sf"/>
</dbReference>
<dbReference type="InterPro" id="IPR037923">
    <property type="entry name" value="HTH-like"/>
</dbReference>
<dbReference type="InterPro" id="IPR018060">
    <property type="entry name" value="HTH_AraC"/>
</dbReference>
<dbReference type="InterPro" id="IPR018062">
    <property type="entry name" value="HTH_AraC-typ_CS"/>
</dbReference>
<dbReference type="InterPro" id="IPR047220">
    <property type="entry name" value="RhaR_RhaS-like_N"/>
</dbReference>
<dbReference type="InterPro" id="IPR014710">
    <property type="entry name" value="RmlC-like_jellyroll"/>
</dbReference>
<dbReference type="InterPro" id="IPR020449">
    <property type="entry name" value="Tscrpt_reg_AraC-type_HTH"/>
</dbReference>
<dbReference type="InterPro" id="IPR023609">
    <property type="entry name" value="Tscrpt_reg_HTH_RhaS"/>
</dbReference>
<dbReference type="NCBIfam" id="NF010028">
    <property type="entry name" value="PRK13503.1"/>
    <property type="match status" value="1"/>
</dbReference>
<dbReference type="PANTHER" id="PTHR46796:SF13">
    <property type="entry name" value="HTH-TYPE TRANSCRIPTIONAL ACTIVATOR RHAS"/>
    <property type="match status" value="1"/>
</dbReference>
<dbReference type="PANTHER" id="PTHR46796">
    <property type="entry name" value="HTH-TYPE TRANSCRIPTIONAL ACTIVATOR RHAS-RELATED"/>
    <property type="match status" value="1"/>
</dbReference>
<dbReference type="Pfam" id="PF02311">
    <property type="entry name" value="AraC_binding"/>
    <property type="match status" value="1"/>
</dbReference>
<dbReference type="Pfam" id="PF12833">
    <property type="entry name" value="HTH_18"/>
    <property type="match status" value="1"/>
</dbReference>
<dbReference type="PRINTS" id="PR00032">
    <property type="entry name" value="HTHARAC"/>
</dbReference>
<dbReference type="SMART" id="SM00342">
    <property type="entry name" value="HTH_ARAC"/>
    <property type="match status" value="1"/>
</dbReference>
<dbReference type="SUPFAM" id="SSF46689">
    <property type="entry name" value="Homeodomain-like"/>
    <property type="match status" value="2"/>
</dbReference>
<dbReference type="SUPFAM" id="SSF51215">
    <property type="entry name" value="Regulatory protein AraC"/>
    <property type="match status" value="1"/>
</dbReference>
<dbReference type="PROSITE" id="PS00041">
    <property type="entry name" value="HTH_ARAC_FAMILY_1"/>
    <property type="match status" value="1"/>
</dbReference>
<dbReference type="PROSITE" id="PS01124">
    <property type="entry name" value="HTH_ARAC_FAMILY_2"/>
    <property type="match status" value="1"/>
</dbReference>
<accession>B4TBY3</accession>
<comment type="function">
    <text evidence="1">Activates expression of the rhaBAD and rhaT operons.</text>
</comment>
<comment type="subunit">
    <text evidence="1">Binds DNA as a dimer.</text>
</comment>
<comment type="subcellular location">
    <subcellularLocation>
        <location evidence="1">Cytoplasm</location>
    </subcellularLocation>
</comment>
<sequence length="278" mass="32119">MTVLHSVDFFPSGKAPVAIEPRLPQAAFPEHHHDFHEIVIVEHGTGIHVFNGQPYTISGGTVCFVRDHDRHLYEHTDNLCLTNVLWRSPDAFQFLAGLDQLLPQEQDGYYPSHWRVNQSVLQQVRQLVGLMERTGDGMDAPAVANREILFMQLLVLLRRSSLMEGATNNDAKLNQLMAWLEDHFAEEVCWEAVAEQFSLSLRTLHRQLKQHTGLTPQRYLNRLRLIKARHLLRHSDHSVTEIAYRCGFGDSNHFSTLFRREFNWSPRDIRQGRDAIIQ</sequence>
<proteinExistence type="inferred from homology"/>
<reference key="1">
    <citation type="journal article" date="2011" name="J. Bacteriol.">
        <title>Comparative genomics of 28 Salmonella enterica isolates: evidence for CRISPR-mediated adaptive sublineage evolution.</title>
        <authorList>
            <person name="Fricke W.F."/>
            <person name="Mammel M.K."/>
            <person name="McDermott P.F."/>
            <person name="Tartera C."/>
            <person name="White D.G."/>
            <person name="Leclerc J.E."/>
            <person name="Ravel J."/>
            <person name="Cebula T.A."/>
        </authorList>
    </citation>
    <scope>NUCLEOTIDE SEQUENCE [LARGE SCALE GENOMIC DNA]</scope>
    <source>
        <strain>SL476</strain>
    </source>
</reference>
<gene>
    <name evidence="1" type="primary">rhaS</name>
    <name type="ordered locus">SeHA_C4377</name>
</gene>